<keyword id="KW-0004">4Fe-4S</keyword>
<keyword id="KW-0997">Cell inner membrane</keyword>
<keyword id="KW-1003">Cell membrane</keyword>
<keyword id="KW-0408">Iron</keyword>
<keyword id="KW-0411">Iron-sulfur</keyword>
<keyword id="KW-0472">Membrane</keyword>
<keyword id="KW-0479">Metal-binding</keyword>
<keyword id="KW-0520">NAD</keyword>
<keyword id="KW-0874">Quinone</keyword>
<keyword id="KW-1185">Reference proteome</keyword>
<keyword id="KW-0677">Repeat</keyword>
<keyword id="KW-1278">Translocase</keyword>
<keyword id="KW-0830">Ubiquinone</keyword>
<organism>
    <name type="scientific">Helicobacter pylori (strain ATCC 700392 / 26695)</name>
    <name type="common">Campylobacter pylori</name>
    <dbReference type="NCBI Taxonomy" id="85962"/>
    <lineage>
        <taxon>Bacteria</taxon>
        <taxon>Pseudomonadati</taxon>
        <taxon>Campylobacterota</taxon>
        <taxon>Epsilonproteobacteria</taxon>
        <taxon>Campylobacterales</taxon>
        <taxon>Helicobacteraceae</taxon>
        <taxon>Helicobacter</taxon>
    </lineage>
</organism>
<dbReference type="EC" id="7.1.1.-" evidence="1"/>
<dbReference type="EMBL" id="AE000511">
    <property type="protein sequence ID" value="AAD08312.1"/>
    <property type="molecule type" value="Genomic_DNA"/>
</dbReference>
<dbReference type="PIR" id="D64678">
    <property type="entry name" value="D64678"/>
</dbReference>
<dbReference type="RefSeq" id="NP_208060.1">
    <property type="nucleotide sequence ID" value="NC_000915.1"/>
</dbReference>
<dbReference type="RefSeq" id="WP_001118555.1">
    <property type="nucleotide sequence ID" value="NC_018939.1"/>
</dbReference>
<dbReference type="SMR" id="O25858"/>
<dbReference type="FunCoup" id="O25858">
    <property type="interactions" value="273"/>
</dbReference>
<dbReference type="IntAct" id="O25858">
    <property type="interactions" value="2"/>
</dbReference>
<dbReference type="STRING" id="85962.HP_1268"/>
<dbReference type="PaxDb" id="85962-C694_06555"/>
<dbReference type="EnsemblBacteria" id="AAD08312">
    <property type="protein sequence ID" value="AAD08312"/>
    <property type="gene ID" value="HP_1268"/>
</dbReference>
<dbReference type="KEGG" id="heo:C694_06555"/>
<dbReference type="KEGG" id="hpy:HP_1268"/>
<dbReference type="PATRIC" id="fig|85962.47.peg.1361"/>
<dbReference type="eggNOG" id="COG1143">
    <property type="taxonomic scope" value="Bacteria"/>
</dbReference>
<dbReference type="InParanoid" id="O25858"/>
<dbReference type="OrthoDB" id="9808559at2"/>
<dbReference type="PhylomeDB" id="O25858"/>
<dbReference type="BioCyc" id="MetaCyc:HP_RS06255-MONOMER"/>
<dbReference type="Proteomes" id="UP000000429">
    <property type="component" value="Chromosome"/>
</dbReference>
<dbReference type="GO" id="GO:0005886">
    <property type="term" value="C:plasma membrane"/>
    <property type="evidence" value="ECO:0007669"/>
    <property type="project" value="UniProtKB-SubCell"/>
</dbReference>
<dbReference type="GO" id="GO:0051539">
    <property type="term" value="F:4 iron, 4 sulfur cluster binding"/>
    <property type="evidence" value="ECO:0007669"/>
    <property type="project" value="UniProtKB-KW"/>
</dbReference>
<dbReference type="GO" id="GO:0005506">
    <property type="term" value="F:iron ion binding"/>
    <property type="evidence" value="ECO:0007669"/>
    <property type="project" value="UniProtKB-UniRule"/>
</dbReference>
<dbReference type="GO" id="GO:0050136">
    <property type="term" value="F:NADH:ubiquinone reductase (non-electrogenic) activity"/>
    <property type="evidence" value="ECO:0007669"/>
    <property type="project" value="UniProtKB-UniRule"/>
</dbReference>
<dbReference type="GO" id="GO:0048038">
    <property type="term" value="F:quinone binding"/>
    <property type="evidence" value="ECO:0007669"/>
    <property type="project" value="UniProtKB-KW"/>
</dbReference>
<dbReference type="GO" id="GO:0009060">
    <property type="term" value="P:aerobic respiration"/>
    <property type="evidence" value="ECO:0000318"/>
    <property type="project" value="GO_Central"/>
</dbReference>
<dbReference type="FunFam" id="3.30.70.3270:FF:000011">
    <property type="entry name" value="NADH-quinone oxidoreductase subunit I"/>
    <property type="match status" value="1"/>
</dbReference>
<dbReference type="Gene3D" id="3.30.70.3270">
    <property type="match status" value="1"/>
</dbReference>
<dbReference type="HAMAP" id="MF_01351">
    <property type="entry name" value="NDH1_NuoI"/>
    <property type="match status" value="1"/>
</dbReference>
<dbReference type="InterPro" id="IPR017896">
    <property type="entry name" value="4Fe4S_Fe-S-bd"/>
</dbReference>
<dbReference type="InterPro" id="IPR017900">
    <property type="entry name" value="4Fe4S_Fe_S_CS"/>
</dbReference>
<dbReference type="InterPro" id="IPR010226">
    <property type="entry name" value="NADH_quinone_OxRdtase_chainI"/>
</dbReference>
<dbReference type="NCBIfam" id="TIGR01971">
    <property type="entry name" value="NuoI"/>
    <property type="match status" value="1"/>
</dbReference>
<dbReference type="NCBIfam" id="NF004542">
    <property type="entry name" value="PRK05888.2-3"/>
    <property type="match status" value="1"/>
</dbReference>
<dbReference type="NCBIfam" id="NF004544">
    <property type="entry name" value="PRK05888.2-6"/>
    <property type="match status" value="1"/>
</dbReference>
<dbReference type="PANTHER" id="PTHR10849:SF20">
    <property type="entry name" value="NADH DEHYDROGENASE [UBIQUINONE] IRON-SULFUR PROTEIN 8, MITOCHONDRIAL"/>
    <property type="match status" value="1"/>
</dbReference>
<dbReference type="PANTHER" id="PTHR10849">
    <property type="entry name" value="NADH DEHYDROGENASE UBIQUINONE IRON-SULFUR PROTEIN 8, MITOCHONDRIAL"/>
    <property type="match status" value="1"/>
</dbReference>
<dbReference type="Pfam" id="PF12838">
    <property type="entry name" value="Fer4_7"/>
    <property type="match status" value="1"/>
</dbReference>
<dbReference type="SUPFAM" id="SSF46548">
    <property type="entry name" value="alpha-helical ferredoxin"/>
    <property type="match status" value="1"/>
</dbReference>
<dbReference type="PROSITE" id="PS00198">
    <property type="entry name" value="4FE4S_FER_1"/>
    <property type="match status" value="1"/>
</dbReference>
<dbReference type="PROSITE" id="PS51379">
    <property type="entry name" value="4FE4S_FER_2"/>
    <property type="match status" value="2"/>
</dbReference>
<reference key="1">
    <citation type="journal article" date="1997" name="Nature">
        <title>The complete genome sequence of the gastric pathogen Helicobacter pylori.</title>
        <authorList>
            <person name="Tomb J.-F."/>
            <person name="White O."/>
            <person name="Kerlavage A.R."/>
            <person name="Clayton R.A."/>
            <person name="Sutton G.G."/>
            <person name="Fleischmann R.D."/>
            <person name="Ketchum K.A."/>
            <person name="Klenk H.-P."/>
            <person name="Gill S.R."/>
            <person name="Dougherty B.A."/>
            <person name="Nelson K.E."/>
            <person name="Quackenbush J."/>
            <person name="Zhou L."/>
            <person name="Kirkness E.F."/>
            <person name="Peterson S.N."/>
            <person name="Loftus B.J."/>
            <person name="Richardson D.L."/>
            <person name="Dodson R.J."/>
            <person name="Khalak H.G."/>
            <person name="Glodek A."/>
            <person name="McKenney K."/>
            <person name="FitzGerald L.M."/>
            <person name="Lee N."/>
            <person name="Adams M.D."/>
            <person name="Hickey E.K."/>
            <person name="Berg D.E."/>
            <person name="Gocayne J.D."/>
            <person name="Utterback T.R."/>
            <person name="Peterson J.D."/>
            <person name="Kelley J.M."/>
            <person name="Cotton M.D."/>
            <person name="Weidman J.F."/>
            <person name="Fujii C."/>
            <person name="Bowman C."/>
            <person name="Watthey L."/>
            <person name="Wallin E."/>
            <person name="Hayes W.S."/>
            <person name="Borodovsky M."/>
            <person name="Karp P.D."/>
            <person name="Smith H.O."/>
            <person name="Fraser C.M."/>
            <person name="Venter J.C."/>
        </authorList>
    </citation>
    <scope>NUCLEOTIDE SEQUENCE [LARGE SCALE GENOMIC DNA]</scope>
    <source>
        <strain>ATCC 700392 / 26695</strain>
    </source>
</reference>
<gene>
    <name evidence="1" type="primary">nuoI</name>
    <name type="ordered locus">HP_1268</name>
</gene>
<sequence length="220" mass="24715">MAKQEYKQLPKRAEVHSATEQFKDTVKTSLGLDLFKGLGLTIKEFFSPSVTIHYPMEQLPLSPRYRAVHNLQRLLDSGSERCIGCGLCEKICTSNCIRIITHKGEDNRKKIDSYTINLGRCIYCGLCAEVCPELAIVMGNRFENASTQRSQYGSKSEFLTSEQDAKNCSHAEFLGFGAVSPNYNERMQATPLDYVQEPSKEESQEETPTNPESNKGDENV</sequence>
<accession>O25858</accession>
<evidence type="ECO:0000255" key="1">
    <source>
        <dbReference type="HAMAP-Rule" id="MF_01351"/>
    </source>
</evidence>
<evidence type="ECO:0000256" key="2">
    <source>
        <dbReference type="SAM" id="MobiDB-lite"/>
    </source>
</evidence>
<name>NUOI_HELPY</name>
<proteinExistence type="inferred from homology"/>
<comment type="function">
    <text evidence="1">NDH-1 shuttles electrons from NADH, via FMN and iron-sulfur (Fe-S) centers, to quinones in the respiratory chain. The immediate electron acceptor for the enzyme in this species is believed to be ubiquinone. Couples the redox reaction to proton translocation (for every two electrons transferred, four hydrogen ions are translocated across the cytoplasmic membrane), and thus conserves the redox energy in a proton gradient.</text>
</comment>
<comment type="catalytic activity">
    <reaction evidence="1">
        <text>a quinone + NADH + 5 H(+)(in) = a quinol + NAD(+) + 4 H(+)(out)</text>
        <dbReference type="Rhea" id="RHEA:57888"/>
        <dbReference type="ChEBI" id="CHEBI:15378"/>
        <dbReference type="ChEBI" id="CHEBI:24646"/>
        <dbReference type="ChEBI" id="CHEBI:57540"/>
        <dbReference type="ChEBI" id="CHEBI:57945"/>
        <dbReference type="ChEBI" id="CHEBI:132124"/>
    </reaction>
</comment>
<comment type="cofactor">
    <cofactor evidence="1">
        <name>[4Fe-4S] cluster</name>
        <dbReference type="ChEBI" id="CHEBI:49883"/>
    </cofactor>
    <text evidence="1">Binds 2 [4Fe-4S] clusters per subunit.</text>
</comment>
<comment type="subunit">
    <text evidence="1">NDH-1 is composed of 14 different subunits. Subunits NuoA, H, J, K, L, M, N constitute the membrane sector of the complex.</text>
</comment>
<comment type="subcellular location">
    <subcellularLocation>
        <location evidence="1">Cell inner membrane</location>
        <topology evidence="1">Peripheral membrane protein</topology>
    </subcellularLocation>
</comment>
<comment type="similarity">
    <text evidence="1">Belongs to the complex I 23 kDa subunit family.</text>
</comment>
<feature type="chain" id="PRO_0000245713" description="NADH-quinone oxidoreductase subunit I">
    <location>
        <begin position="1"/>
        <end position="220"/>
    </location>
</feature>
<feature type="domain" description="4Fe-4S ferredoxin-type 1" evidence="1">
    <location>
        <begin position="71"/>
        <end position="102"/>
    </location>
</feature>
<feature type="domain" description="4Fe-4S ferredoxin-type 2" evidence="1">
    <location>
        <begin position="112"/>
        <end position="141"/>
    </location>
</feature>
<feature type="region of interest" description="Disordered" evidence="2">
    <location>
        <begin position="187"/>
        <end position="220"/>
    </location>
</feature>
<feature type="binding site" evidence="1">
    <location>
        <position position="82"/>
    </location>
    <ligand>
        <name>[4Fe-4S] cluster</name>
        <dbReference type="ChEBI" id="CHEBI:49883"/>
        <label>1</label>
    </ligand>
</feature>
<feature type="binding site" evidence="1">
    <location>
        <position position="85"/>
    </location>
    <ligand>
        <name>[4Fe-4S] cluster</name>
        <dbReference type="ChEBI" id="CHEBI:49883"/>
        <label>1</label>
    </ligand>
</feature>
<feature type="binding site" evidence="1">
    <location>
        <position position="88"/>
    </location>
    <ligand>
        <name>[4Fe-4S] cluster</name>
        <dbReference type="ChEBI" id="CHEBI:49883"/>
        <label>1</label>
    </ligand>
</feature>
<feature type="binding site" evidence="1">
    <location>
        <position position="92"/>
    </location>
    <ligand>
        <name>[4Fe-4S] cluster</name>
        <dbReference type="ChEBI" id="CHEBI:49883"/>
        <label>2</label>
    </ligand>
</feature>
<feature type="binding site" evidence="1">
    <location>
        <position position="121"/>
    </location>
    <ligand>
        <name>[4Fe-4S] cluster</name>
        <dbReference type="ChEBI" id="CHEBI:49883"/>
        <label>2</label>
    </ligand>
</feature>
<feature type="binding site" evidence="1">
    <location>
        <position position="124"/>
    </location>
    <ligand>
        <name>[4Fe-4S] cluster</name>
        <dbReference type="ChEBI" id="CHEBI:49883"/>
        <label>2</label>
    </ligand>
</feature>
<feature type="binding site" evidence="1">
    <location>
        <position position="127"/>
    </location>
    <ligand>
        <name>[4Fe-4S] cluster</name>
        <dbReference type="ChEBI" id="CHEBI:49883"/>
        <label>2</label>
    </ligand>
</feature>
<feature type="binding site" evidence="1">
    <location>
        <position position="131"/>
    </location>
    <ligand>
        <name>[4Fe-4S] cluster</name>
        <dbReference type="ChEBI" id="CHEBI:49883"/>
        <label>1</label>
    </ligand>
</feature>
<protein>
    <recommendedName>
        <fullName evidence="1">NADH-quinone oxidoreductase subunit I</fullName>
        <ecNumber evidence="1">7.1.1.-</ecNumber>
    </recommendedName>
    <alternativeName>
        <fullName evidence="1">NADH dehydrogenase I subunit I</fullName>
    </alternativeName>
    <alternativeName>
        <fullName evidence="1">NDH-1 subunit I</fullName>
    </alternativeName>
</protein>